<keyword id="KW-0007">Acetylation</keyword>
<keyword id="KW-0106">Calcium</keyword>
<keyword id="KW-0963">Cytoplasm</keyword>
<keyword id="KW-0479">Metal-binding</keyword>
<keyword id="KW-0539">Nucleus</keyword>
<keyword id="KW-1185">Reference proteome</keyword>
<keyword id="KW-0677">Repeat</keyword>
<keyword id="KW-0964">Secreted</keyword>
<organism>
    <name type="scientific">Canis lupus familiaris</name>
    <name type="common">Dog</name>
    <name type="synonym">Canis familiaris</name>
    <dbReference type="NCBI Taxonomy" id="9615"/>
    <lineage>
        <taxon>Eukaryota</taxon>
        <taxon>Metazoa</taxon>
        <taxon>Chordata</taxon>
        <taxon>Craniata</taxon>
        <taxon>Vertebrata</taxon>
        <taxon>Euteleostomi</taxon>
        <taxon>Mammalia</taxon>
        <taxon>Eutheria</taxon>
        <taxon>Laurasiatheria</taxon>
        <taxon>Carnivora</taxon>
        <taxon>Caniformia</taxon>
        <taxon>Canidae</taxon>
        <taxon>Canis</taxon>
    </lineage>
</organism>
<comment type="function">
    <text evidence="1 2">Calcium-binding protein that plays a role in various cellular processes including motility, angiogenesis, cell differentiation, apoptosis, and autophagy. Increases cell motility and invasiveness by interacting with non-muscle myosin heavy chain (NMMHC) IIA/MYH9 (By similarity). Mechanistically, promotes filament depolymerization and increases the amount of soluble myosin-IIA, resulting in the formation of stable protrusions facilitating chemotaxis (By similarity). Also modulates the pro-apoptotic function of TP53 by binding to its C-terminal transactivation domain within the nucleus and reducing its protein levels (By similarity). Within the extracellular space, stimulates cytokine production including granulocyte colony-stimulating factor and CCL24 from T-lymphocytes (By similarity). In addition, stimulates T-lymphocyte chemotaxis by acting as a chemoattractant complex with PGLYRP1 that promotes lymphocyte migration via CCR5 and CXCR3 receptors (By similarity).</text>
</comment>
<comment type="subunit">
    <text evidence="2">Homodimer. Interacts with PPFIBP1 in a calcium-dependent mode. Interacts with PGLYRP1; this complex acts as a chemoattractant that promotes lymphocyte movement. Interacts with MYH9; this interaction increases cell motility. Interacts with Annexin 2/ANXA2. Interacts with TP53; this interaction promotes TP53 degradation. Interacts with CCR5 and CXCR3. Interacts with FCGR3A; this interaction inhibits PKC-dependent phosphorylation of FCGR3A.</text>
</comment>
<comment type="subcellular location">
    <subcellularLocation>
        <location evidence="2">Secreted</location>
    </subcellularLocation>
    <subcellularLocation>
        <location evidence="2">Nucleus</location>
    </subcellularLocation>
    <subcellularLocation>
        <location evidence="1">Cytoplasm</location>
    </subcellularLocation>
</comment>
<comment type="similarity">
    <text evidence="4">Belongs to the S-100 family.</text>
</comment>
<proteinExistence type="inferred from homology"/>
<accession>Q9TV56</accession>
<reference key="1">
    <citation type="journal article" date="2000" name="Clin. Exp. Metastasis">
        <title>Expression of metastasis-associated mts1 gene is co-induced with membrane type-1 matrix metalloproteinase (MT1-MMP) during oncogenic transformation and tubular formation of Madin Darby canine kidney (MDCK) epithelial cells.</title>
        <authorList>
            <person name="Miyamori H."/>
            <person name="Hasegawa K."/>
            <person name="Kim K.R."/>
            <person name="Sato H."/>
        </authorList>
    </citation>
    <scope>NUCLEOTIDE SEQUENCE [MRNA]</scope>
    <source>
        <strain>Cocker spaniel</strain>
        <tissue>Kidney</tissue>
    </source>
</reference>
<name>S10A4_CANLF</name>
<gene>
    <name type="primary">S100A4</name>
    <name type="synonym">MTS1</name>
</gene>
<sequence length="101" mass="11847">MTFPLEKALDVMVSTFHKYSGKEGDKFKLNRSELKELLMRELPSFLGKRTDEAAFQKLMSNLDSNRDNEVDFQEYCVFLSCVAMMCNEFFEGFPDKQPRKK</sequence>
<dbReference type="EMBL" id="AB031064">
    <property type="protein sequence ID" value="BAA83419.1"/>
    <property type="molecule type" value="mRNA"/>
</dbReference>
<dbReference type="RefSeq" id="NP_001003161.1">
    <property type="nucleotide sequence ID" value="NM_001003161.3"/>
</dbReference>
<dbReference type="RefSeq" id="NP_001350483.1">
    <property type="nucleotide sequence ID" value="NM_001363554.1"/>
</dbReference>
<dbReference type="RefSeq" id="XP_005622283.1">
    <property type="nucleotide sequence ID" value="XM_005622226.2"/>
</dbReference>
<dbReference type="SMR" id="Q9TV56"/>
<dbReference type="FunCoup" id="Q9TV56">
    <property type="interactions" value="28"/>
</dbReference>
<dbReference type="STRING" id="9615.ENSCAFP00000025859"/>
<dbReference type="PaxDb" id="9612-ENSCAFP00000025862"/>
<dbReference type="GeneID" id="403787"/>
<dbReference type="KEGG" id="cfa:403787"/>
<dbReference type="CTD" id="6275"/>
<dbReference type="eggNOG" id="ENOG502S4AU">
    <property type="taxonomic scope" value="Eukaryota"/>
</dbReference>
<dbReference type="HOGENOM" id="CLU_138624_2_0_1"/>
<dbReference type="InParanoid" id="Q9TV56"/>
<dbReference type="OMA" id="QDLPDKM"/>
<dbReference type="OrthoDB" id="8881129at2759"/>
<dbReference type="TreeFam" id="TF332727"/>
<dbReference type="Proteomes" id="UP000002254">
    <property type="component" value="Unplaced"/>
</dbReference>
<dbReference type="Proteomes" id="UP000694429">
    <property type="component" value="Unplaced"/>
</dbReference>
<dbReference type="Proteomes" id="UP000694542">
    <property type="component" value="Unplaced"/>
</dbReference>
<dbReference type="Proteomes" id="UP000805418">
    <property type="component" value="Unplaced"/>
</dbReference>
<dbReference type="GO" id="GO:0005615">
    <property type="term" value="C:extracellular space"/>
    <property type="evidence" value="ECO:0000318"/>
    <property type="project" value="GO_Central"/>
</dbReference>
<dbReference type="GO" id="GO:0005634">
    <property type="term" value="C:nucleus"/>
    <property type="evidence" value="ECO:0000318"/>
    <property type="project" value="GO_Central"/>
</dbReference>
<dbReference type="GO" id="GO:0048471">
    <property type="term" value="C:perinuclear region of cytoplasm"/>
    <property type="evidence" value="ECO:0000318"/>
    <property type="project" value="GO_Central"/>
</dbReference>
<dbReference type="GO" id="GO:0005509">
    <property type="term" value="F:calcium ion binding"/>
    <property type="evidence" value="ECO:0000318"/>
    <property type="project" value="GO_Central"/>
</dbReference>
<dbReference type="GO" id="GO:0048306">
    <property type="term" value="F:calcium-dependent protein binding"/>
    <property type="evidence" value="ECO:0000318"/>
    <property type="project" value="GO_Central"/>
</dbReference>
<dbReference type="GO" id="GO:0050786">
    <property type="term" value="F:RAGE receptor binding"/>
    <property type="evidence" value="ECO:0000318"/>
    <property type="project" value="GO_Central"/>
</dbReference>
<dbReference type="GO" id="GO:0046914">
    <property type="term" value="F:transition metal ion binding"/>
    <property type="evidence" value="ECO:0007669"/>
    <property type="project" value="InterPro"/>
</dbReference>
<dbReference type="GO" id="GO:0043123">
    <property type="term" value="P:positive regulation of canonical NF-kappaB signal transduction"/>
    <property type="evidence" value="ECO:0000318"/>
    <property type="project" value="GO_Central"/>
</dbReference>
<dbReference type="CDD" id="cd00213">
    <property type="entry name" value="S-100"/>
    <property type="match status" value="1"/>
</dbReference>
<dbReference type="FunFam" id="1.10.238.10:FF:000044">
    <property type="entry name" value="Protein S100"/>
    <property type="match status" value="1"/>
</dbReference>
<dbReference type="Gene3D" id="1.10.238.10">
    <property type="entry name" value="EF-hand"/>
    <property type="match status" value="1"/>
</dbReference>
<dbReference type="InterPro" id="IPR011992">
    <property type="entry name" value="EF-hand-dom_pair"/>
</dbReference>
<dbReference type="InterPro" id="IPR018247">
    <property type="entry name" value="EF_Hand_1_Ca_BS"/>
</dbReference>
<dbReference type="InterPro" id="IPR002048">
    <property type="entry name" value="EF_hand_dom"/>
</dbReference>
<dbReference type="InterPro" id="IPR034325">
    <property type="entry name" value="S-100_dom"/>
</dbReference>
<dbReference type="InterPro" id="IPR001751">
    <property type="entry name" value="S100/CaBP7/8-like_CS"/>
</dbReference>
<dbReference type="InterPro" id="IPR013787">
    <property type="entry name" value="S100_Ca-bd_sub"/>
</dbReference>
<dbReference type="PANTHER" id="PTHR11639:SF51">
    <property type="entry name" value="PROTEIN S100-A4"/>
    <property type="match status" value="1"/>
</dbReference>
<dbReference type="PANTHER" id="PTHR11639">
    <property type="entry name" value="S100 CALCIUM-BINDING PROTEIN"/>
    <property type="match status" value="1"/>
</dbReference>
<dbReference type="Pfam" id="PF01023">
    <property type="entry name" value="S_100"/>
    <property type="match status" value="1"/>
</dbReference>
<dbReference type="SMART" id="SM01394">
    <property type="entry name" value="S_100"/>
    <property type="match status" value="1"/>
</dbReference>
<dbReference type="SUPFAM" id="SSF47473">
    <property type="entry name" value="EF-hand"/>
    <property type="match status" value="1"/>
</dbReference>
<dbReference type="PROSITE" id="PS00018">
    <property type="entry name" value="EF_HAND_1"/>
    <property type="match status" value="1"/>
</dbReference>
<dbReference type="PROSITE" id="PS50222">
    <property type="entry name" value="EF_HAND_2"/>
    <property type="match status" value="1"/>
</dbReference>
<dbReference type="PROSITE" id="PS00303">
    <property type="entry name" value="S100_CABP"/>
    <property type="match status" value="1"/>
</dbReference>
<protein>
    <recommendedName>
        <fullName>Protein S100-A4</fullName>
    </recommendedName>
    <alternativeName>
        <fullName>Metastasin</fullName>
    </alternativeName>
    <alternativeName>
        <fullName>S100 calcium-binding protein A4</fullName>
    </alternativeName>
</protein>
<evidence type="ECO:0000250" key="1">
    <source>
        <dbReference type="UniProtKB" id="P07091"/>
    </source>
</evidence>
<evidence type="ECO:0000250" key="2">
    <source>
        <dbReference type="UniProtKB" id="P26447"/>
    </source>
</evidence>
<evidence type="ECO:0000255" key="3">
    <source>
        <dbReference type="PROSITE-ProRule" id="PRU00448"/>
    </source>
</evidence>
<evidence type="ECO:0000305" key="4"/>
<feature type="chain" id="PRO_0000143976" description="Protein S100-A4">
    <location>
        <begin position="1"/>
        <end position="101"/>
    </location>
</feature>
<feature type="domain" description="EF-hand 1" evidence="4">
    <location>
        <begin position="12"/>
        <end position="47"/>
    </location>
</feature>
<feature type="domain" description="EF-hand 2" evidence="3">
    <location>
        <begin position="50"/>
        <end position="85"/>
    </location>
</feature>
<feature type="binding site" evidence="4">
    <location>
        <position position="28"/>
    </location>
    <ligand>
        <name>Ca(2+)</name>
        <dbReference type="ChEBI" id="CHEBI:29108"/>
        <label>1</label>
        <note>low affinity</note>
    </ligand>
</feature>
<feature type="binding site" evidence="4">
    <location>
        <position position="33"/>
    </location>
    <ligand>
        <name>Ca(2+)</name>
        <dbReference type="ChEBI" id="CHEBI:29108"/>
        <label>1</label>
        <note>low affinity</note>
    </ligand>
</feature>
<feature type="binding site" evidence="3">
    <location>
        <position position="63"/>
    </location>
    <ligand>
        <name>Ca(2+)</name>
        <dbReference type="ChEBI" id="CHEBI:29108"/>
        <label>2</label>
        <note>high affinity</note>
    </ligand>
</feature>
<feature type="binding site" evidence="3">
    <location>
        <position position="65"/>
    </location>
    <ligand>
        <name>Ca(2+)</name>
        <dbReference type="ChEBI" id="CHEBI:29108"/>
        <label>2</label>
        <note>high affinity</note>
    </ligand>
</feature>
<feature type="binding site" evidence="3">
    <location>
        <position position="67"/>
    </location>
    <ligand>
        <name>Ca(2+)</name>
        <dbReference type="ChEBI" id="CHEBI:29108"/>
        <label>2</label>
        <note>high affinity</note>
    </ligand>
</feature>
<feature type="binding site" evidence="3">
    <location>
        <position position="69"/>
    </location>
    <ligand>
        <name>Ca(2+)</name>
        <dbReference type="ChEBI" id="CHEBI:29108"/>
        <label>2</label>
        <note>high affinity</note>
    </ligand>
</feature>
<feature type="binding site" evidence="3">
    <location>
        <position position="74"/>
    </location>
    <ligand>
        <name>Ca(2+)</name>
        <dbReference type="ChEBI" id="CHEBI:29108"/>
        <label>2</label>
        <note>high affinity</note>
    </ligand>
</feature>
<feature type="modified residue" description="N6-acetyllysine" evidence="2">
    <location>
        <position position="7"/>
    </location>
</feature>
<feature type="modified residue" description="N6-acetyllysine" evidence="2">
    <location>
        <position position="35"/>
    </location>
</feature>